<evidence type="ECO:0000250" key="1"/>
<evidence type="ECO:0000305" key="2"/>
<keyword id="KW-0903">Direct protein sequencing</keyword>
<keyword id="KW-1015">Disulfide bond</keyword>
<keyword id="KW-0372">Hormone</keyword>
<keyword id="KW-0964">Secreted</keyword>
<sequence>LPICANGSTNCHQIPLDDLFERVVKLAHRIHSLTSDMFNEFDERYAQGRGFISRAINNCHTSSLTTPEDKEQAQKFHHDDLLRLVMKVLRSWNDPLLQLVSEVPQGIGEAPGTILWKVTEVEDQTKQLIEGMEKILGRMHPNGLDNEVLSLWPMPMAMHAGDGSKLFAFYNLLHCFRRDSFKIDSYLKLLRCRLFHEGGC</sequence>
<protein>
    <recommendedName>
        <fullName>Prolactin</fullName>
        <shortName>PRL</shortName>
    </recommendedName>
</protein>
<organism>
    <name type="scientific">Protopterus aethiopicus</name>
    <name type="common">Marbled lungfish</name>
    <dbReference type="NCBI Taxonomy" id="7886"/>
    <lineage>
        <taxon>Eukaryota</taxon>
        <taxon>Metazoa</taxon>
        <taxon>Chordata</taxon>
        <taxon>Craniata</taxon>
        <taxon>Vertebrata</taxon>
        <taxon>Euteleostomi</taxon>
        <taxon>Dipnomorpha</taxon>
        <taxon>Ceratodontiformes</taxon>
        <taxon>Lepidosirenoidei</taxon>
        <taxon>Protopteridae</taxon>
        <taxon>Protopterus</taxon>
    </lineage>
</organism>
<name>PRL_PROAT</name>
<reference key="1">
    <citation type="journal article" date="1993" name="Biochim. Biophys. Acta">
        <title>Lungfish prolactin exhibits close tetrapod relationships.</title>
        <authorList>
            <person name="Noso T."/>
            <person name="Nicoll C.S."/>
            <person name="Kawauchi H."/>
        </authorList>
    </citation>
    <scope>PROTEIN SEQUENCE</scope>
    <source>
        <tissue>Pituitary</tissue>
    </source>
</reference>
<dbReference type="PIR" id="S34604">
    <property type="entry name" value="S34604"/>
</dbReference>
<dbReference type="SMR" id="P33091"/>
<dbReference type="GO" id="GO:0005615">
    <property type="term" value="C:extracellular space"/>
    <property type="evidence" value="ECO:0007669"/>
    <property type="project" value="TreeGrafter"/>
</dbReference>
<dbReference type="GO" id="GO:0005179">
    <property type="term" value="F:hormone activity"/>
    <property type="evidence" value="ECO:0007669"/>
    <property type="project" value="UniProtKB-KW"/>
</dbReference>
<dbReference type="GO" id="GO:0008284">
    <property type="term" value="P:positive regulation of cell population proliferation"/>
    <property type="evidence" value="ECO:0007669"/>
    <property type="project" value="TreeGrafter"/>
</dbReference>
<dbReference type="GO" id="GO:0046427">
    <property type="term" value="P:positive regulation of receptor signaling pathway via JAK-STAT"/>
    <property type="evidence" value="ECO:0007669"/>
    <property type="project" value="TreeGrafter"/>
</dbReference>
<dbReference type="GO" id="GO:0031667">
    <property type="term" value="P:response to nutrient levels"/>
    <property type="evidence" value="ECO:0007669"/>
    <property type="project" value="TreeGrafter"/>
</dbReference>
<dbReference type="CDD" id="cd10288">
    <property type="entry name" value="prolactin_like"/>
    <property type="match status" value="1"/>
</dbReference>
<dbReference type="Gene3D" id="1.20.1250.10">
    <property type="match status" value="1"/>
</dbReference>
<dbReference type="InterPro" id="IPR009079">
    <property type="entry name" value="4_helix_cytokine-like_core"/>
</dbReference>
<dbReference type="InterPro" id="IPR001400">
    <property type="entry name" value="Somatotropin/Prolactin"/>
</dbReference>
<dbReference type="InterPro" id="IPR018116">
    <property type="entry name" value="Somatotropin_CS"/>
</dbReference>
<dbReference type="PANTHER" id="PTHR11417:SF5">
    <property type="entry name" value="PROLACTIN"/>
    <property type="match status" value="1"/>
</dbReference>
<dbReference type="PANTHER" id="PTHR11417">
    <property type="entry name" value="SOMATOTROPIN,PROLACTIN"/>
    <property type="match status" value="1"/>
</dbReference>
<dbReference type="Pfam" id="PF00103">
    <property type="entry name" value="Hormone_1"/>
    <property type="match status" value="1"/>
</dbReference>
<dbReference type="PRINTS" id="PR00836">
    <property type="entry name" value="SOMATOTROPIN"/>
</dbReference>
<dbReference type="SUPFAM" id="SSF47266">
    <property type="entry name" value="4-helical cytokines"/>
    <property type="match status" value="1"/>
</dbReference>
<dbReference type="PROSITE" id="PS00266">
    <property type="entry name" value="SOMATOTROPIN_1"/>
    <property type="match status" value="1"/>
</dbReference>
<dbReference type="PROSITE" id="PS00338">
    <property type="entry name" value="SOMATOTROPIN_2"/>
    <property type="match status" value="1"/>
</dbReference>
<comment type="subcellular location">
    <subcellularLocation>
        <location>Secreted</location>
    </subcellularLocation>
</comment>
<comment type="tissue specificity">
    <text>Pituitary gland.</text>
</comment>
<comment type="similarity">
    <text evidence="2">Belongs to the somatotropin/prolactin family.</text>
</comment>
<accession>P33091</accession>
<proteinExistence type="evidence at protein level"/>
<feature type="chain" id="PRO_0000181326" description="Prolactin">
    <location>
        <begin position="1"/>
        <end position="200"/>
    </location>
</feature>
<feature type="disulfide bond" evidence="1">
    <location>
        <begin position="4"/>
        <end position="11"/>
    </location>
</feature>
<feature type="disulfide bond" evidence="1">
    <location>
        <begin position="59"/>
        <end position="175"/>
    </location>
</feature>
<feature type="disulfide bond" evidence="1">
    <location>
        <begin position="192"/>
        <end position="200"/>
    </location>
</feature>
<feature type="sequence variant">
    <original>R</original>
    <variation>F</variation>
    <location>
        <position position="22"/>
    </location>
</feature>
<feature type="sequence variant">
    <original>F</original>
    <variation>G</variation>
    <location>
        <position position="41"/>
    </location>
</feature>
<gene>
    <name type="primary">prl</name>
</gene>